<reference key="1">
    <citation type="journal article" date="2004" name="Nature">
        <title>Genome sequence of Silicibacter pomeroyi reveals adaptations to the marine environment.</title>
        <authorList>
            <person name="Moran M.A."/>
            <person name="Buchan A."/>
            <person name="Gonzalez J.M."/>
            <person name="Heidelberg J.F."/>
            <person name="Whitman W.B."/>
            <person name="Kiene R.P."/>
            <person name="Henriksen J.R."/>
            <person name="King G.M."/>
            <person name="Belas R."/>
            <person name="Fuqua C."/>
            <person name="Brinkac L.M."/>
            <person name="Lewis M."/>
            <person name="Johri S."/>
            <person name="Weaver B."/>
            <person name="Pai G."/>
            <person name="Eisen J.A."/>
            <person name="Rahe E."/>
            <person name="Sheldon W.M."/>
            <person name="Ye W."/>
            <person name="Miller T.R."/>
            <person name="Carlton J."/>
            <person name="Rasko D.A."/>
            <person name="Paulsen I.T."/>
            <person name="Ren Q."/>
            <person name="Daugherty S.C."/>
            <person name="DeBoy R.T."/>
            <person name="Dodson R.J."/>
            <person name="Durkin A.S."/>
            <person name="Madupu R."/>
            <person name="Nelson W.C."/>
            <person name="Sullivan S.A."/>
            <person name="Rosovitz M.J."/>
            <person name="Haft D.H."/>
            <person name="Selengut J."/>
            <person name="Ward N."/>
        </authorList>
    </citation>
    <scope>NUCLEOTIDE SEQUENCE [LARGE SCALE GENOMIC DNA]</scope>
    <source>
        <strain>ATCC 700808 / DSM 15171 / DSS-3</strain>
    </source>
</reference>
<reference key="2">
    <citation type="journal article" date="2014" name="Stand. Genomic Sci.">
        <title>An updated genome annotation for the model marine bacterium Ruegeria pomeroyi DSS-3.</title>
        <authorList>
            <person name="Rivers A.R."/>
            <person name="Smith C.B."/>
            <person name="Moran M.A."/>
        </authorList>
    </citation>
    <scope>GENOME REANNOTATION</scope>
    <source>
        <strain>ATCC 700808 / DSM 15171 / DSS-3</strain>
    </source>
</reference>
<gene>
    <name evidence="1" type="primary">glyA1</name>
    <name type="synonym">glyA-1</name>
    <name type="ordered locus">SPO1572</name>
</gene>
<gene>
    <name evidence="1" type="primary">glyA2</name>
    <name type="synonym">glyA-2</name>
    <name type="ordered locus">SPO2940</name>
</gene>
<feature type="chain" id="PRO_0000235024" description="Serine hydroxymethyltransferase">
    <location>
        <begin position="1"/>
        <end position="431"/>
    </location>
</feature>
<feature type="binding site" evidence="1">
    <location>
        <position position="128"/>
    </location>
    <ligand>
        <name>(6S)-5,6,7,8-tetrahydrofolate</name>
        <dbReference type="ChEBI" id="CHEBI:57453"/>
    </ligand>
</feature>
<feature type="binding site" evidence="1">
    <location>
        <begin position="132"/>
        <end position="134"/>
    </location>
    <ligand>
        <name>(6S)-5,6,7,8-tetrahydrofolate</name>
        <dbReference type="ChEBI" id="CHEBI:57453"/>
    </ligand>
</feature>
<feature type="site" description="Plays an important role in substrate specificity" evidence="1">
    <location>
        <position position="236"/>
    </location>
</feature>
<feature type="modified residue" description="N6-(pyridoxal phosphate)lysine" evidence="1">
    <location>
        <position position="237"/>
    </location>
</feature>
<keyword id="KW-0028">Amino-acid biosynthesis</keyword>
<keyword id="KW-0963">Cytoplasm</keyword>
<keyword id="KW-0554">One-carbon metabolism</keyword>
<keyword id="KW-0663">Pyridoxal phosphate</keyword>
<keyword id="KW-1185">Reference proteome</keyword>
<keyword id="KW-0808">Transferase</keyword>
<evidence type="ECO:0000255" key="1">
    <source>
        <dbReference type="HAMAP-Rule" id="MF_00051"/>
    </source>
</evidence>
<comment type="function">
    <text evidence="1">Catalyzes the reversible interconversion of serine and glycine with tetrahydrofolate (THF) serving as the one-carbon carrier. This reaction serves as the major source of one-carbon groups required for the biosynthesis of purines, thymidylate, methionine, and other important biomolecules. Also exhibits THF-independent aldolase activity toward beta-hydroxyamino acids, producing glycine and aldehydes, via a retro-aldol mechanism.</text>
</comment>
<comment type="catalytic activity">
    <reaction evidence="1">
        <text>(6R)-5,10-methylene-5,6,7,8-tetrahydrofolate + glycine + H2O = (6S)-5,6,7,8-tetrahydrofolate + L-serine</text>
        <dbReference type="Rhea" id="RHEA:15481"/>
        <dbReference type="ChEBI" id="CHEBI:15377"/>
        <dbReference type="ChEBI" id="CHEBI:15636"/>
        <dbReference type="ChEBI" id="CHEBI:33384"/>
        <dbReference type="ChEBI" id="CHEBI:57305"/>
        <dbReference type="ChEBI" id="CHEBI:57453"/>
        <dbReference type="EC" id="2.1.2.1"/>
    </reaction>
</comment>
<comment type="cofactor">
    <cofactor evidence="1">
        <name>pyridoxal 5'-phosphate</name>
        <dbReference type="ChEBI" id="CHEBI:597326"/>
    </cofactor>
</comment>
<comment type="pathway">
    <text evidence="1">One-carbon metabolism; tetrahydrofolate interconversion.</text>
</comment>
<comment type="pathway">
    <text evidence="1">Amino-acid biosynthesis; glycine biosynthesis; glycine from L-serine: step 1/1.</text>
</comment>
<comment type="subunit">
    <text evidence="1">Homodimer.</text>
</comment>
<comment type="subcellular location">
    <subcellularLocation>
        <location evidence="1">Cytoplasm</location>
    </subcellularLocation>
</comment>
<comment type="similarity">
    <text evidence="1">Belongs to the SHMT family.</text>
</comment>
<proteinExistence type="inferred from homology"/>
<dbReference type="EC" id="2.1.2.1" evidence="1"/>
<dbReference type="EMBL" id="CP000031">
    <property type="protein sequence ID" value="AAV96181.1"/>
    <property type="molecule type" value="Genomic_DNA"/>
</dbReference>
<dbReference type="EMBL" id="CP000031">
    <property type="protein sequence ID" value="AAV94859.1"/>
    <property type="molecule type" value="Genomic_DNA"/>
</dbReference>
<dbReference type="RefSeq" id="WP_011047309.1">
    <property type="nucleotide sequence ID" value="NC_003911.12"/>
</dbReference>
<dbReference type="SMR" id="Q5LPA8"/>
<dbReference type="STRING" id="246200.SPO1572"/>
<dbReference type="PaxDb" id="246200-SPO1572"/>
<dbReference type="KEGG" id="sil:SPO1572"/>
<dbReference type="KEGG" id="sil:SPO2940"/>
<dbReference type="eggNOG" id="COG0112">
    <property type="taxonomic scope" value="Bacteria"/>
</dbReference>
<dbReference type="HOGENOM" id="CLU_022477_2_1_5"/>
<dbReference type="OrthoDB" id="9803846at2"/>
<dbReference type="UniPathway" id="UPA00193"/>
<dbReference type="UniPathway" id="UPA00288">
    <property type="reaction ID" value="UER01023"/>
</dbReference>
<dbReference type="Proteomes" id="UP000001023">
    <property type="component" value="Chromosome"/>
</dbReference>
<dbReference type="GO" id="GO:0005829">
    <property type="term" value="C:cytosol"/>
    <property type="evidence" value="ECO:0007669"/>
    <property type="project" value="TreeGrafter"/>
</dbReference>
<dbReference type="GO" id="GO:0004372">
    <property type="term" value="F:glycine hydroxymethyltransferase activity"/>
    <property type="evidence" value="ECO:0007669"/>
    <property type="project" value="UniProtKB-UniRule"/>
</dbReference>
<dbReference type="GO" id="GO:0030170">
    <property type="term" value="F:pyridoxal phosphate binding"/>
    <property type="evidence" value="ECO:0007669"/>
    <property type="project" value="UniProtKB-UniRule"/>
</dbReference>
<dbReference type="GO" id="GO:0019264">
    <property type="term" value="P:glycine biosynthetic process from serine"/>
    <property type="evidence" value="ECO:0007669"/>
    <property type="project" value="UniProtKB-UniRule"/>
</dbReference>
<dbReference type="GO" id="GO:0035999">
    <property type="term" value="P:tetrahydrofolate interconversion"/>
    <property type="evidence" value="ECO:0007669"/>
    <property type="project" value="UniProtKB-UniRule"/>
</dbReference>
<dbReference type="CDD" id="cd00378">
    <property type="entry name" value="SHMT"/>
    <property type="match status" value="1"/>
</dbReference>
<dbReference type="FunFam" id="3.40.640.10:FF:000001">
    <property type="entry name" value="Serine hydroxymethyltransferase"/>
    <property type="match status" value="1"/>
</dbReference>
<dbReference type="Gene3D" id="3.90.1150.10">
    <property type="entry name" value="Aspartate Aminotransferase, domain 1"/>
    <property type="match status" value="1"/>
</dbReference>
<dbReference type="Gene3D" id="3.40.640.10">
    <property type="entry name" value="Type I PLP-dependent aspartate aminotransferase-like (Major domain)"/>
    <property type="match status" value="1"/>
</dbReference>
<dbReference type="HAMAP" id="MF_00051">
    <property type="entry name" value="SHMT"/>
    <property type="match status" value="1"/>
</dbReference>
<dbReference type="InterPro" id="IPR015424">
    <property type="entry name" value="PyrdxlP-dep_Trfase"/>
</dbReference>
<dbReference type="InterPro" id="IPR015421">
    <property type="entry name" value="PyrdxlP-dep_Trfase_major"/>
</dbReference>
<dbReference type="InterPro" id="IPR015422">
    <property type="entry name" value="PyrdxlP-dep_Trfase_small"/>
</dbReference>
<dbReference type="InterPro" id="IPR001085">
    <property type="entry name" value="Ser_HO-MeTrfase"/>
</dbReference>
<dbReference type="InterPro" id="IPR049943">
    <property type="entry name" value="Ser_HO-MeTrfase-like"/>
</dbReference>
<dbReference type="InterPro" id="IPR019798">
    <property type="entry name" value="Ser_HO-MeTrfase_PLP_BS"/>
</dbReference>
<dbReference type="InterPro" id="IPR039429">
    <property type="entry name" value="SHMT-like_dom"/>
</dbReference>
<dbReference type="NCBIfam" id="NF000586">
    <property type="entry name" value="PRK00011.1"/>
    <property type="match status" value="1"/>
</dbReference>
<dbReference type="PANTHER" id="PTHR11680">
    <property type="entry name" value="SERINE HYDROXYMETHYLTRANSFERASE"/>
    <property type="match status" value="1"/>
</dbReference>
<dbReference type="PANTHER" id="PTHR11680:SF35">
    <property type="entry name" value="SERINE HYDROXYMETHYLTRANSFERASE 1"/>
    <property type="match status" value="1"/>
</dbReference>
<dbReference type="Pfam" id="PF00464">
    <property type="entry name" value="SHMT"/>
    <property type="match status" value="1"/>
</dbReference>
<dbReference type="PIRSF" id="PIRSF000412">
    <property type="entry name" value="SHMT"/>
    <property type="match status" value="1"/>
</dbReference>
<dbReference type="SUPFAM" id="SSF53383">
    <property type="entry name" value="PLP-dependent transferases"/>
    <property type="match status" value="1"/>
</dbReference>
<dbReference type="PROSITE" id="PS00096">
    <property type="entry name" value="SHMT"/>
    <property type="match status" value="1"/>
</dbReference>
<organism>
    <name type="scientific">Ruegeria pomeroyi (strain ATCC 700808 / DSM 15171 / DSS-3)</name>
    <name type="common">Silicibacter pomeroyi</name>
    <dbReference type="NCBI Taxonomy" id="246200"/>
    <lineage>
        <taxon>Bacteria</taxon>
        <taxon>Pseudomonadati</taxon>
        <taxon>Pseudomonadota</taxon>
        <taxon>Alphaproteobacteria</taxon>
        <taxon>Rhodobacterales</taxon>
        <taxon>Roseobacteraceae</taxon>
        <taxon>Ruegeria</taxon>
    </lineage>
</organism>
<accession>Q5LPA8</accession>
<sequence>MNASHQDTGFFTEALSERDPELFGAITSELGRQRDEIELIASENIVSAAVMQAQGSVMTNKYAEGYPGRRYYGGCQYVDIAENLAIERAKQLFGCGFANVQPNSGSQANQGVFQALIKPGDTILGMSLDAGGHLTHGAAPNQSGKWFNAVQYGVRQQDNLLDYDQVEALAKEHRPKLIIAGGSAIPRQIDFARMREIADMVGAYLHVDMAHFAGLVAAGEHPSPFPHAHVATTTTHKTLRGPRGGMILTNDEDIAKKVNSAIFPGIQGGPLMHVIAAKAVAFGEALRPEFKTYIQQVIANAQALSDQLIKGGLDTVTHGTDTHVVLVDLRPKGVKGNATEKALGRAHITCNKNGVPFDPEKPTVTSGIRLGSPAGTTRGFAETEFRQIADWIIEVVDGLAANGEDANEAVEDKVKAQVAALCAKFPIYPNL</sequence>
<name>GLYA_RUEPO</name>
<protein>
    <recommendedName>
        <fullName evidence="1">Serine hydroxymethyltransferase</fullName>
        <shortName evidence="1">SHMT</shortName>
        <shortName evidence="1">Serine methylase</shortName>
        <ecNumber evidence="1">2.1.2.1</ecNumber>
    </recommendedName>
</protein>